<gene>
    <name evidence="1" type="primary">dtd</name>
    <name type="ordered locus">Sde_0546</name>
</gene>
<evidence type="ECO:0000255" key="1">
    <source>
        <dbReference type="HAMAP-Rule" id="MF_00518"/>
    </source>
</evidence>
<proteinExistence type="inferred from homology"/>
<reference key="1">
    <citation type="journal article" date="2008" name="PLoS Genet.">
        <title>Complete genome sequence of the complex carbohydrate-degrading marine bacterium, Saccharophagus degradans strain 2-40 T.</title>
        <authorList>
            <person name="Weiner R.M."/>
            <person name="Taylor L.E. II"/>
            <person name="Henrissat B."/>
            <person name="Hauser L."/>
            <person name="Land M."/>
            <person name="Coutinho P.M."/>
            <person name="Rancurel C."/>
            <person name="Saunders E.H."/>
            <person name="Longmire A.G."/>
            <person name="Zhang H."/>
            <person name="Bayer E.A."/>
            <person name="Gilbert H.J."/>
            <person name="Larimer F."/>
            <person name="Zhulin I.B."/>
            <person name="Ekborg N.A."/>
            <person name="Lamed R."/>
            <person name="Richardson P.M."/>
            <person name="Borovok I."/>
            <person name="Hutcheson S."/>
        </authorList>
    </citation>
    <scope>NUCLEOTIDE SEQUENCE [LARGE SCALE GENOMIC DNA]</scope>
    <source>
        <strain>2-40 / ATCC 43961 / DSM 17024</strain>
    </source>
</reference>
<name>DTD_SACD2</name>
<organism>
    <name type="scientific">Saccharophagus degradans (strain 2-40 / ATCC 43961 / DSM 17024)</name>
    <dbReference type="NCBI Taxonomy" id="203122"/>
    <lineage>
        <taxon>Bacteria</taxon>
        <taxon>Pseudomonadati</taxon>
        <taxon>Pseudomonadota</taxon>
        <taxon>Gammaproteobacteria</taxon>
        <taxon>Cellvibrionales</taxon>
        <taxon>Cellvibrionaceae</taxon>
        <taxon>Saccharophagus</taxon>
    </lineage>
</organism>
<dbReference type="EC" id="3.1.1.96" evidence="1"/>
<dbReference type="EMBL" id="CP000282">
    <property type="protein sequence ID" value="ABD79810.1"/>
    <property type="molecule type" value="Genomic_DNA"/>
</dbReference>
<dbReference type="RefSeq" id="WP_011467031.1">
    <property type="nucleotide sequence ID" value="NC_007912.1"/>
</dbReference>
<dbReference type="SMR" id="Q21NB9"/>
<dbReference type="GeneID" id="98612240"/>
<dbReference type="KEGG" id="sde:Sde_0546"/>
<dbReference type="eggNOG" id="COG1490">
    <property type="taxonomic scope" value="Bacteria"/>
</dbReference>
<dbReference type="HOGENOM" id="CLU_076901_1_1_6"/>
<dbReference type="OrthoDB" id="9801395at2"/>
<dbReference type="Proteomes" id="UP000001947">
    <property type="component" value="Chromosome"/>
</dbReference>
<dbReference type="GO" id="GO:0005737">
    <property type="term" value="C:cytoplasm"/>
    <property type="evidence" value="ECO:0007669"/>
    <property type="project" value="UniProtKB-SubCell"/>
</dbReference>
<dbReference type="GO" id="GO:0051500">
    <property type="term" value="F:D-tyrosyl-tRNA(Tyr) deacylase activity"/>
    <property type="evidence" value="ECO:0007669"/>
    <property type="project" value="TreeGrafter"/>
</dbReference>
<dbReference type="GO" id="GO:0106026">
    <property type="term" value="F:Gly-tRNA(Ala) deacylase activity"/>
    <property type="evidence" value="ECO:0007669"/>
    <property type="project" value="UniProtKB-UniRule"/>
</dbReference>
<dbReference type="GO" id="GO:0043908">
    <property type="term" value="F:Ser(Gly)-tRNA(Ala) hydrolase activity"/>
    <property type="evidence" value="ECO:0007669"/>
    <property type="project" value="UniProtKB-UniRule"/>
</dbReference>
<dbReference type="GO" id="GO:0000049">
    <property type="term" value="F:tRNA binding"/>
    <property type="evidence" value="ECO:0007669"/>
    <property type="project" value="UniProtKB-UniRule"/>
</dbReference>
<dbReference type="GO" id="GO:0019478">
    <property type="term" value="P:D-amino acid catabolic process"/>
    <property type="evidence" value="ECO:0007669"/>
    <property type="project" value="UniProtKB-UniRule"/>
</dbReference>
<dbReference type="CDD" id="cd00563">
    <property type="entry name" value="Dtyr_deacylase"/>
    <property type="match status" value="1"/>
</dbReference>
<dbReference type="FunFam" id="3.50.80.10:FF:000001">
    <property type="entry name" value="D-aminoacyl-tRNA deacylase"/>
    <property type="match status" value="1"/>
</dbReference>
<dbReference type="Gene3D" id="3.50.80.10">
    <property type="entry name" value="D-tyrosyl-tRNA(Tyr) deacylase"/>
    <property type="match status" value="1"/>
</dbReference>
<dbReference type="HAMAP" id="MF_00518">
    <property type="entry name" value="Deacylase_Dtd"/>
    <property type="match status" value="1"/>
</dbReference>
<dbReference type="InterPro" id="IPR003732">
    <property type="entry name" value="Daa-tRNA_deacyls_DTD"/>
</dbReference>
<dbReference type="InterPro" id="IPR023509">
    <property type="entry name" value="DTD-like_sf"/>
</dbReference>
<dbReference type="NCBIfam" id="TIGR00256">
    <property type="entry name" value="D-aminoacyl-tRNA deacylase"/>
    <property type="match status" value="1"/>
</dbReference>
<dbReference type="PANTHER" id="PTHR10472:SF5">
    <property type="entry name" value="D-AMINOACYL-TRNA DEACYLASE 1"/>
    <property type="match status" value="1"/>
</dbReference>
<dbReference type="PANTHER" id="PTHR10472">
    <property type="entry name" value="D-TYROSYL-TRNA TYR DEACYLASE"/>
    <property type="match status" value="1"/>
</dbReference>
<dbReference type="Pfam" id="PF02580">
    <property type="entry name" value="Tyr_Deacylase"/>
    <property type="match status" value="1"/>
</dbReference>
<dbReference type="SUPFAM" id="SSF69500">
    <property type="entry name" value="DTD-like"/>
    <property type="match status" value="1"/>
</dbReference>
<feature type="chain" id="PRO_0000259308" description="D-aminoacyl-tRNA deacylase">
    <location>
        <begin position="1"/>
        <end position="145"/>
    </location>
</feature>
<feature type="short sequence motif" description="Gly-cisPro motif, important for rejection of L-amino acids" evidence="1">
    <location>
        <begin position="137"/>
        <end position="138"/>
    </location>
</feature>
<comment type="function">
    <text evidence="1">An aminoacyl-tRNA editing enzyme that deacylates mischarged D-aminoacyl-tRNAs. Also deacylates mischarged glycyl-tRNA(Ala), protecting cells against glycine mischarging by AlaRS. Acts via tRNA-based rather than protein-based catalysis; rejects L-amino acids rather than detecting D-amino acids in the active site. By recycling D-aminoacyl-tRNA to D-amino acids and free tRNA molecules, this enzyme counteracts the toxicity associated with the formation of D-aminoacyl-tRNA entities in vivo and helps enforce protein L-homochirality.</text>
</comment>
<comment type="catalytic activity">
    <reaction evidence="1">
        <text>glycyl-tRNA(Ala) + H2O = tRNA(Ala) + glycine + H(+)</text>
        <dbReference type="Rhea" id="RHEA:53744"/>
        <dbReference type="Rhea" id="RHEA-COMP:9657"/>
        <dbReference type="Rhea" id="RHEA-COMP:13640"/>
        <dbReference type="ChEBI" id="CHEBI:15377"/>
        <dbReference type="ChEBI" id="CHEBI:15378"/>
        <dbReference type="ChEBI" id="CHEBI:57305"/>
        <dbReference type="ChEBI" id="CHEBI:78442"/>
        <dbReference type="ChEBI" id="CHEBI:78522"/>
        <dbReference type="EC" id="3.1.1.96"/>
    </reaction>
</comment>
<comment type="catalytic activity">
    <reaction evidence="1">
        <text>a D-aminoacyl-tRNA + H2O = a tRNA + a D-alpha-amino acid + H(+)</text>
        <dbReference type="Rhea" id="RHEA:13953"/>
        <dbReference type="Rhea" id="RHEA-COMP:10123"/>
        <dbReference type="Rhea" id="RHEA-COMP:10124"/>
        <dbReference type="ChEBI" id="CHEBI:15377"/>
        <dbReference type="ChEBI" id="CHEBI:15378"/>
        <dbReference type="ChEBI" id="CHEBI:59871"/>
        <dbReference type="ChEBI" id="CHEBI:78442"/>
        <dbReference type="ChEBI" id="CHEBI:79333"/>
        <dbReference type="EC" id="3.1.1.96"/>
    </reaction>
</comment>
<comment type="subunit">
    <text evidence="1">Homodimer.</text>
</comment>
<comment type="subcellular location">
    <subcellularLocation>
        <location evidence="1">Cytoplasm</location>
    </subcellularLocation>
</comment>
<comment type="domain">
    <text evidence="1">A Gly-cisPro motif from one monomer fits into the active site of the other monomer to allow specific chiral rejection of L-amino acids.</text>
</comment>
<comment type="similarity">
    <text evidence="1">Belongs to the DTD family.</text>
</comment>
<protein>
    <recommendedName>
        <fullName evidence="1">D-aminoacyl-tRNA deacylase</fullName>
        <shortName evidence="1">DTD</shortName>
        <ecNumber evidence="1">3.1.1.96</ecNumber>
    </recommendedName>
    <alternativeName>
        <fullName evidence="1">Gly-tRNA(Ala) deacylase</fullName>
    </alternativeName>
</protein>
<keyword id="KW-0963">Cytoplasm</keyword>
<keyword id="KW-0378">Hydrolase</keyword>
<keyword id="KW-1185">Reference proteome</keyword>
<keyword id="KW-0694">RNA-binding</keyword>
<keyword id="KW-0820">tRNA-binding</keyword>
<sequence>MKVLIQRVSHASVVVEGQTIGAIDKGLLLFVGIEKTDSTETLERMANKVLAYRVFSDDEGKMNLNVQQIGGGVLSISQFTLAADTQKGLRPSFSCAAPPAEAQALYDKFVNLLKAKHSPIATGEFAADMKVSLLNDGPVTFMLTM</sequence>
<accession>Q21NB9</accession>